<gene>
    <name type="primary">M</name>
</gene>
<proteinExistence type="inferred from homology"/>
<organismHost>
    <name type="scientific">Homo sapiens</name>
    <name type="common">Human</name>
    <dbReference type="NCBI Taxonomy" id="9606"/>
</organismHost>
<organismHost>
    <name type="scientific">Sus scrofa</name>
    <name type="common">Pig</name>
    <dbReference type="NCBI Taxonomy" id="9823"/>
</organismHost>
<reference key="1">
    <citation type="journal article" date="1994" name="Virology">
        <title>The ability of influenza C virus to generate cord-like structures is influenced by the gene coding for M protein.</title>
        <authorList>
            <person name="Nishimura H."/>
            <person name="Hongo S."/>
            <person name="Sugawara K."/>
            <person name="Muraki Y."/>
            <person name="Kitame F."/>
            <person name="Washioka H."/>
            <person name="Tonosaki A."/>
            <person name="Nakamura K."/>
        </authorList>
    </citation>
    <scope>NUCLEOTIDE SEQUENCE [GENOMIC RNA]</scope>
</reference>
<comment type="function">
    <text evidence="1">Ion channel, which might have a role in genome packaging and uncoating processes.</text>
</comment>
<comment type="subunit">
    <text evidence="1">Homodimer; disulfide-linked. Homotetramer; disulfide-linked.</text>
</comment>
<comment type="subcellular location">
    <molecule>Polyprotein p42</molecule>
    <subcellularLocation>
        <location evidence="3">Host endoplasmic reticulum membrane</location>
        <topology evidence="3">Multi-pass membrane protein</topology>
    </subcellularLocation>
</comment>
<comment type="subcellular location">
    <molecule>Protein M1'</molecule>
    <subcellularLocation>
        <location evidence="3">Virion membrane</location>
        <topology evidence="3">Single-pass type II membrane protein</topology>
    </subcellularLocation>
</comment>
<comment type="subcellular location">
    <molecule>Protein CM2</molecule>
    <subcellularLocation>
        <location evidence="3">Virion membrane</location>
        <topology evidence="3">Single-pass type I membrane protein</topology>
    </subcellularLocation>
    <subcellularLocation>
        <location evidence="3">Host cell membrane</location>
        <topology evidence="3">Single-pass type I membrane protein</topology>
    </subcellularLocation>
</comment>
<comment type="alternative products">
    <event type="alternative splicing"/>
    <isoform>
        <id>O39842-1</id>
        <name>p42</name>
        <sequence type="displayed"/>
    </isoform>
    <isoform>
        <id>O39842-2</id>
        <name>M1</name>
        <name>CM1</name>
        <sequence type="described" ref="VSP_022115"/>
    </isoform>
</comment>
<comment type="PTM">
    <text evidence="1">Palmitoylated.</text>
</comment>
<comment type="PTM">
    <text evidence="1">N-glycosylated.</text>
</comment>
<comment type="PTM">
    <text evidence="1">Ser-337 is the major site of phosphorylation, Ser-362 being a minor one.</text>
</comment>
<comment type="miscellaneous">
    <molecule>Isoform p42</molecule>
    <text>Produced by unspliced mRNA.</text>
</comment>
<comment type="similarity">
    <text evidence="3">Belongs to the influenza C protein M1 family.</text>
</comment>
<dbReference type="EMBL" id="D26546">
    <property type="protein sequence ID" value="BAA05544.1"/>
    <property type="molecule type" value="Genomic_RNA"/>
</dbReference>
<dbReference type="EMBL" id="D26546">
    <property type="protein sequence ID" value="BAA05545.1"/>
    <property type="status" value="ALT_TERM"/>
    <property type="molecule type" value="Genomic_RNA"/>
</dbReference>
<dbReference type="SMR" id="O39842"/>
<dbReference type="GlyCosmos" id="O39842">
    <property type="glycosylation" value="1 site, No reported glycans"/>
</dbReference>
<dbReference type="GO" id="GO:0044167">
    <property type="term" value="C:host cell endoplasmic reticulum membrane"/>
    <property type="evidence" value="ECO:0007669"/>
    <property type="project" value="UniProtKB-SubCell"/>
</dbReference>
<dbReference type="GO" id="GO:0020002">
    <property type="term" value="C:host cell plasma membrane"/>
    <property type="evidence" value="ECO:0007669"/>
    <property type="project" value="UniProtKB-SubCell"/>
</dbReference>
<dbReference type="GO" id="GO:0016020">
    <property type="term" value="C:membrane"/>
    <property type="evidence" value="ECO:0007669"/>
    <property type="project" value="UniProtKB-KW"/>
</dbReference>
<dbReference type="GO" id="GO:0019028">
    <property type="term" value="C:viral capsid"/>
    <property type="evidence" value="ECO:0007669"/>
    <property type="project" value="InterPro"/>
</dbReference>
<dbReference type="GO" id="GO:0055036">
    <property type="term" value="C:virion membrane"/>
    <property type="evidence" value="ECO:0007669"/>
    <property type="project" value="UniProtKB-SubCell"/>
</dbReference>
<dbReference type="GO" id="GO:0015267">
    <property type="term" value="F:channel activity"/>
    <property type="evidence" value="ECO:0007669"/>
    <property type="project" value="UniProtKB-KW"/>
</dbReference>
<dbReference type="GO" id="GO:0039660">
    <property type="term" value="F:structural constituent of virion"/>
    <property type="evidence" value="ECO:0007669"/>
    <property type="project" value="UniProtKB-KW"/>
</dbReference>
<dbReference type="GO" id="GO:0034220">
    <property type="term" value="P:monoatomic ion transmembrane transport"/>
    <property type="evidence" value="ECO:0007669"/>
    <property type="project" value="UniProtKB-KW"/>
</dbReference>
<dbReference type="InterPro" id="IPR004271">
    <property type="entry name" value="CM1"/>
</dbReference>
<dbReference type="InterPro" id="IPR004267">
    <property type="entry name" value="CM2"/>
</dbReference>
<dbReference type="Pfam" id="PF03026">
    <property type="entry name" value="CM1"/>
    <property type="match status" value="1"/>
</dbReference>
<dbReference type="Pfam" id="PF03021">
    <property type="entry name" value="CM2"/>
    <property type="match status" value="1"/>
</dbReference>
<evidence type="ECO:0000250" key="1"/>
<evidence type="ECO:0000255" key="2"/>
<evidence type="ECO:0000305" key="3"/>
<accession>O39842</accession>
<accession>Q96792</accession>
<feature type="chain" id="PRO_0000408879" description="Polyprotein p42">
    <location>
        <begin position="1"/>
        <end position="374"/>
    </location>
</feature>
<feature type="chain" id="PRO_0000269459" description="Protein M1'">
    <location>
        <begin position="1"/>
        <end position="259"/>
    </location>
</feature>
<feature type="chain" id="PRO_0000269907" description="Protein CM2">
    <location>
        <begin position="260"/>
        <end position="374"/>
    </location>
</feature>
<feature type="topological domain" description="Cytoplasmic" evidence="2">
    <location>
        <begin position="1"/>
        <end position="238"/>
    </location>
</feature>
<feature type="transmembrane region" description="Helical; Signal-anchor for type II membrane protein" evidence="2">
    <location>
        <begin position="239"/>
        <end position="259"/>
    </location>
</feature>
<feature type="topological domain" description="Extracellular" evidence="2">
    <location>
        <begin position="260"/>
        <end position="288"/>
    </location>
</feature>
<feature type="transmembrane region" description="Helical" evidence="2">
    <location>
        <begin position="289"/>
        <end position="309"/>
    </location>
</feature>
<feature type="topological domain" description="Cytoplasmic" evidence="2">
    <location>
        <begin position="310"/>
        <end position="374"/>
    </location>
</feature>
<feature type="site" description="Cleavage; by host signal peptidase">
    <location>
        <begin position="259"/>
        <end position="260"/>
    </location>
</feature>
<feature type="modified residue" description="Phosphoserine; by host" evidence="1">
    <location>
        <position position="337"/>
    </location>
</feature>
<feature type="modified residue" description="Phosphoserine; by host" evidence="1">
    <location>
        <position position="362"/>
    </location>
</feature>
<feature type="lipid moiety-binding region" description="S-palmitoyl cysteine; by host" evidence="1">
    <location>
        <position position="324"/>
    </location>
</feature>
<feature type="glycosylation site" description="N-linked (GlcNAc...) asparagine; by host" evidence="2">
    <location>
        <position position="270"/>
    </location>
</feature>
<feature type="splice variant" id="VSP_022115" description="In isoform M1." evidence="3">
    <location>
        <begin position="243"/>
        <end position="374"/>
    </location>
</feature>
<name>MAT_INCTA</name>
<keyword id="KW-0025">Alternative splicing</keyword>
<keyword id="KW-1015">Disulfide bond</keyword>
<keyword id="KW-0325">Glycoprotein</keyword>
<keyword id="KW-1032">Host cell membrane</keyword>
<keyword id="KW-1038">Host endoplasmic reticulum</keyword>
<keyword id="KW-1043">Host membrane</keyword>
<keyword id="KW-0407">Ion channel</keyword>
<keyword id="KW-0406">Ion transport</keyword>
<keyword id="KW-0449">Lipoprotein</keyword>
<keyword id="KW-0472">Membrane</keyword>
<keyword id="KW-0564">Palmitate</keyword>
<keyword id="KW-0597">Phosphoprotein</keyword>
<keyword id="KW-0735">Signal-anchor</keyword>
<keyword id="KW-0812">Transmembrane</keyword>
<keyword id="KW-1133">Transmembrane helix</keyword>
<keyword id="KW-0813">Transport</keyword>
<keyword id="KW-1182">Viral ion channel</keyword>
<keyword id="KW-0468">Viral matrix protein</keyword>
<keyword id="KW-0946">Virion</keyword>
<sequence>MAHEILIAETEAFLKNVAPETRTTIISAITGGKSACKSAAKLIKNEHLPLMSGEATTMHIVMRCLYPEIKPWKKASDMLNKATSSLKKSEGRDIRKQMKAAGDFLGVESMMKMRAFRDDQIMEMVEEVYDHPNDYTPDIRIGTITAWLRCKNKKSERYRSNVSESGRTALKIHEVRKASTAMNEIAGITGLGEEALSLQRQTESLAILCNHTFGSNIMRPHLEKAIKGVEGRVGEMGRMAMKWLVVIIYFSITSQPASACNLKTCLKLFNNTDAVTVHCFNENQGYMLTLASLGLGIITMLYLLVKIIIELVNGFVLGRWERWCGDIKTTIMPEIDSMEKDIALSRERLDLGEDAPDETDNSPIPFSNDGIFEI</sequence>
<protein>
    <recommendedName>
        <fullName>Polyprotein p42</fullName>
    </recommendedName>
    <component>
        <recommendedName>
            <fullName>Protein M1'</fullName>
        </recommendedName>
        <alternativeName>
            <fullName>CM1'</fullName>
        </alternativeName>
        <alternativeName>
            <fullName>p31</fullName>
        </alternativeName>
    </component>
    <component>
        <recommendedName>
            <fullName>Protein CM2</fullName>
        </recommendedName>
    </component>
</protein>
<organism>
    <name type="scientific">Influenza C virus (strain C/Taylor/1233/1947)</name>
    <dbReference type="NCBI Taxonomy" id="11567"/>
    <lineage>
        <taxon>Viruses</taxon>
        <taxon>Riboviria</taxon>
        <taxon>Orthornavirae</taxon>
        <taxon>Negarnaviricota</taxon>
        <taxon>Polyploviricotina</taxon>
        <taxon>Insthoviricetes</taxon>
        <taxon>Articulavirales</taxon>
        <taxon>Orthomyxoviridae</taxon>
        <taxon>Gammainfluenzavirus</taxon>
        <taxon>Gammainfluenzavirus influenzae</taxon>
        <taxon>Influenza C virus</taxon>
    </lineage>
</organism>